<evidence type="ECO:0000305" key="1"/>
<reference key="1">
    <citation type="journal article" date="1997" name="Nature">
        <title>Molecular basis of symbiosis between Rhizobium and legumes.</title>
        <authorList>
            <person name="Freiberg C.A."/>
            <person name="Fellay R."/>
            <person name="Bairoch A."/>
            <person name="Broughton W.J."/>
            <person name="Rosenthal A."/>
            <person name="Perret X."/>
        </authorList>
    </citation>
    <scope>NUCLEOTIDE SEQUENCE [LARGE SCALE GENOMIC DNA]</scope>
    <source>
        <strain>NBRC 101917 / NGR234</strain>
    </source>
</reference>
<reference key="2">
    <citation type="journal article" date="2009" name="Appl. Environ. Microbiol.">
        <title>Rhizobium sp. strain NGR234 possesses a remarkable number of secretion systems.</title>
        <authorList>
            <person name="Schmeisser C."/>
            <person name="Liesegang H."/>
            <person name="Krysciak D."/>
            <person name="Bakkou N."/>
            <person name="Le Quere A."/>
            <person name="Wollherr A."/>
            <person name="Heinemeyer I."/>
            <person name="Morgenstern B."/>
            <person name="Pommerening-Roeser A."/>
            <person name="Flores M."/>
            <person name="Palacios R."/>
            <person name="Brenner S."/>
            <person name="Gottschalk G."/>
            <person name="Schmitz R.A."/>
            <person name="Broughton W.J."/>
            <person name="Perret X."/>
            <person name="Strittmatter A.W."/>
            <person name="Streit W.R."/>
        </authorList>
    </citation>
    <scope>NUCLEOTIDE SEQUENCE [LARGE SCALE GENOMIC DNA]</scope>
    <source>
        <strain>NBRC 101917 / NGR234</strain>
    </source>
</reference>
<dbReference type="EMBL" id="U00090">
    <property type="protein sequence ID" value="AAB91913.1"/>
    <property type="molecule type" value="Genomic_DNA"/>
</dbReference>
<dbReference type="RefSeq" id="NP_444126.1">
    <property type="nucleotide sequence ID" value="NC_000914.2"/>
</dbReference>
<dbReference type="RefSeq" id="WP_010875140.1">
    <property type="nucleotide sequence ID" value="NC_000914.2"/>
</dbReference>
<dbReference type="SMR" id="P55684"/>
<dbReference type="KEGG" id="rhi:NGR_a00990"/>
<dbReference type="eggNOG" id="COG2141">
    <property type="taxonomic scope" value="Bacteria"/>
</dbReference>
<dbReference type="HOGENOM" id="CLU_027853_3_0_5"/>
<dbReference type="OrthoDB" id="9804736at2"/>
<dbReference type="Proteomes" id="UP000001054">
    <property type="component" value="Plasmid pNGR234a"/>
</dbReference>
<dbReference type="GO" id="GO:0005829">
    <property type="term" value="C:cytosol"/>
    <property type="evidence" value="ECO:0007669"/>
    <property type="project" value="TreeGrafter"/>
</dbReference>
<dbReference type="GO" id="GO:0004497">
    <property type="term" value="F:monooxygenase activity"/>
    <property type="evidence" value="ECO:0007669"/>
    <property type="project" value="UniProtKB-KW"/>
</dbReference>
<dbReference type="GO" id="GO:0016705">
    <property type="term" value="F:oxidoreductase activity, acting on paired donors, with incorporation or reduction of molecular oxygen"/>
    <property type="evidence" value="ECO:0007669"/>
    <property type="project" value="InterPro"/>
</dbReference>
<dbReference type="Gene3D" id="3.20.20.30">
    <property type="entry name" value="Luciferase-like domain"/>
    <property type="match status" value="1"/>
</dbReference>
<dbReference type="InterPro" id="IPR050766">
    <property type="entry name" value="Bact_Lucif_Oxidored"/>
</dbReference>
<dbReference type="InterPro" id="IPR011251">
    <property type="entry name" value="Luciferase-like_dom"/>
</dbReference>
<dbReference type="InterPro" id="IPR036661">
    <property type="entry name" value="Luciferase-like_sf"/>
</dbReference>
<dbReference type="PANTHER" id="PTHR30137:SF8">
    <property type="entry name" value="BLR5498 PROTEIN"/>
    <property type="match status" value="1"/>
</dbReference>
<dbReference type="PANTHER" id="PTHR30137">
    <property type="entry name" value="LUCIFERASE-LIKE MONOOXYGENASE"/>
    <property type="match status" value="1"/>
</dbReference>
<dbReference type="Pfam" id="PF00296">
    <property type="entry name" value="Bac_luciferase"/>
    <property type="match status" value="1"/>
</dbReference>
<dbReference type="SUPFAM" id="SSF51679">
    <property type="entry name" value="Bacterial luciferase-like"/>
    <property type="match status" value="1"/>
</dbReference>
<geneLocation type="plasmid">
    <name>sym pNGR234a</name>
</geneLocation>
<gene>
    <name type="ordered locus">NGR_a00990</name>
    <name type="ORF">y4wF</name>
</gene>
<feature type="chain" id="PRO_0000220186" description="Uncharacterized protein y4wF">
    <location>
        <begin position="1"/>
        <end position="342"/>
    </location>
</feature>
<proteinExistence type="inferred from homology"/>
<protein>
    <recommendedName>
        <fullName>Uncharacterized protein y4wF</fullName>
    </recommendedName>
</protein>
<accession>P55684</accession>
<sequence>MRKILPSKLAFGIFDHLDEDGNAMARQYADRLTLAEACDRLGFYAYHLAEHHFSPHGRSPSPNLFLSSVAQRTRQLRLGPLVMLLSLSHPLRAFEEICMLDHLSGGRAELGIGRGSLPIELGYFGIDPDAVAGRYFEASEILMEAMRGGNLSYRGDHFELNNVPLILRPHQRPHPPTWIATNRPESARWAATNGANVACVGPASLVRRITDAFRSEEGLSSDANCNASFLGLLRMIVVGHSAEHAYSLAAPAFQRWLNNFKFLYDLHAIPVPPNLPLTFDAAIESELCVVGTAAVVRRTLLDQLEEAGANYLLCQVAFGDLPLDASLYTAMTIQSELMDRVG</sequence>
<comment type="similarity">
    <text evidence="1">Belongs to the bacterial luciferase oxidoreductase family.</text>
</comment>
<organism>
    <name type="scientific">Sinorhizobium fredii (strain NBRC 101917 / NGR234)</name>
    <dbReference type="NCBI Taxonomy" id="394"/>
    <lineage>
        <taxon>Bacteria</taxon>
        <taxon>Pseudomonadati</taxon>
        <taxon>Pseudomonadota</taxon>
        <taxon>Alphaproteobacteria</taxon>
        <taxon>Hyphomicrobiales</taxon>
        <taxon>Rhizobiaceae</taxon>
        <taxon>Sinorhizobium/Ensifer group</taxon>
        <taxon>Sinorhizobium</taxon>
    </lineage>
</organism>
<name>Y4WF_SINFN</name>
<keyword id="KW-0503">Monooxygenase</keyword>
<keyword id="KW-0560">Oxidoreductase</keyword>
<keyword id="KW-0614">Plasmid</keyword>
<keyword id="KW-1185">Reference proteome</keyword>